<feature type="chain" id="PRO_0000416894" description="Dynein axonemal assembly factor 3">
    <location>
        <begin position="1"/>
        <end position="583"/>
    </location>
</feature>
<feature type="region of interest" description="Disordered" evidence="3">
    <location>
        <begin position="455"/>
        <end position="534"/>
    </location>
</feature>
<comment type="function">
    <text evidence="1">Required for the assembly of axonemal inner and outer dynein arms. Involved in preassembly of dyneins into complexes before their transport into cilia (By similarity).</text>
</comment>
<comment type="subcellular location">
    <subcellularLocation>
        <location evidence="1">Cytoplasm</location>
    </subcellularLocation>
    <subcellularLocation>
        <location evidence="2">Dynein axonemal particle</location>
    </subcellularLocation>
</comment>
<comment type="similarity">
    <text evidence="4">Belongs to the DNAAF3 family.</text>
</comment>
<sequence length="583" mass="64373">MTTPAGSGNGFGTVSWWGLSPALDLQAESPPVDPDSQSKTEHKIPELDALLLGSVDGRHMLRTLARAMLWPLRRFNFYVLENNLEAVARHMLIFSLALEEPEKMGLQERSETFLELWGNALLRPSVAAFLRAQASHLSNLVPEPDRLEELLPWLSLRPLKFRERDALEAVFRFWSGGEKGPEVFPMSRLWDSRLRHYLGSRYDARRGVADWDLRMKLHDRGAQVIHFHEFRRWRDTGVAFELRDLSAYHVPNRTMASGRLLSHRGERVAARGYWGDIATGPFVAFGIEADDKSLLRTSNGQPVKTASEITQHNVTELFRDVAAWRGPRAIKGNVEETKSPEPDAPAQEPFTIHFLPLDSSQTLHHKTCYRGRFQLLYVSCGMIHLLSPELGACVAPGGNLVVELARYLVDLRPKELKAFSDRVVEIAQAAGFAPHTGTKPSETFARFYKLGDSTRGGGDSAVESGPVPSKVLAPTPESINPPQADQAPSLEVMSPPKVDQTPPLEAMSPPEADQAPPLEAMSPPRADQIPPLEAMSPLQAEVVLPLEAISPPQADLAPPPEVISPVQEALAMSSAIAPLKHVT</sequence>
<evidence type="ECO:0000250" key="1"/>
<evidence type="ECO:0000250" key="2">
    <source>
        <dbReference type="UniProtKB" id="Q32NQ7"/>
    </source>
</evidence>
<evidence type="ECO:0000256" key="3">
    <source>
        <dbReference type="SAM" id="MobiDB-lite"/>
    </source>
</evidence>
<evidence type="ECO:0000305" key="4"/>
<proteinExistence type="inferred from homology"/>
<name>DAAF3_RAT</name>
<organism>
    <name type="scientific">Rattus norvegicus</name>
    <name type="common">Rat</name>
    <dbReference type="NCBI Taxonomy" id="10116"/>
    <lineage>
        <taxon>Eukaryota</taxon>
        <taxon>Metazoa</taxon>
        <taxon>Chordata</taxon>
        <taxon>Craniata</taxon>
        <taxon>Vertebrata</taxon>
        <taxon>Euteleostomi</taxon>
        <taxon>Mammalia</taxon>
        <taxon>Eutheria</taxon>
        <taxon>Euarchontoglires</taxon>
        <taxon>Glires</taxon>
        <taxon>Rodentia</taxon>
        <taxon>Myomorpha</taxon>
        <taxon>Muroidea</taxon>
        <taxon>Muridae</taxon>
        <taxon>Murinae</taxon>
        <taxon>Rattus</taxon>
    </lineage>
</organism>
<reference key="1">
    <citation type="journal article" date="2004" name="Nature">
        <title>Genome sequence of the Brown Norway rat yields insights into mammalian evolution.</title>
        <authorList>
            <person name="Gibbs R.A."/>
            <person name="Weinstock G.M."/>
            <person name="Metzker M.L."/>
            <person name="Muzny D.M."/>
            <person name="Sodergren E.J."/>
            <person name="Scherer S."/>
            <person name="Scott G."/>
            <person name="Steffen D."/>
            <person name="Worley K.C."/>
            <person name="Burch P.E."/>
            <person name="Okwuonu G."/>
            <person name="Hines S."/>
            <person name="Lewis L."/>
            <person name="Deramo C."/>
            <person name="Delgado O."/>
            <person name="Dugan-Rocha S."/>
            <person name="Miner G."/>
            <person name="Morgan M."/>
            <person name="Hawes A."/>
            <person name="Gill R."/>
            <person name="Holt R.A."/>
            <person name="Adams M.D."/>
            <person name="Amanatides P.G."/>
            <person name="Baden-Tillson H."/>
            <person name="Barnstead M."/>
            <person name="Chin S."/>
            <person name="Evans C.A."/>
            <person name="Ferriera S."/>
            <person name="Fosler C."/>
            <person name="Glodek A."/>
            <person name="Gu Z."/>
            <person name="Jennings D."/>
            <person name="Kraft C.L."/>
            <person name="Nguyen T."/>
            <person name="Pfannkoch C.M."/>
            <person name="Sitter C."/>
            <person name="Sutton G.G."/>
            <person name="Venter J.C."/>
            <person name="Woodage T."/>
            <person name="Smith D."/>
            <person name="Lee H.-M."/>
            <person name="Gustafson E."/>
            <person name="Cahill P."/>
            <person name="Kana A."/>
            <person name="Doucette-Stamm L."/>
            <person name="Weinstock K."/>
            <person name="Fechtel K."/>
            <person name="Weiss R.B."/>
            <person name="Dunn D.M."/>
            <person name="Green E.D."/>
            <person name="Blakesley R.W."/>
            <person name="Bouffard G.G."/>
            <person name="De Jong P.J."/>
            <person name="Osoegawa K."/>
            <person name="Zhu B."/>
            <person name="Marra M."/>
            <person name="Schein J."/>
            <person name="Bosdet I."/>
            <person name="Fjell C."/>
            <person name="Jones S."/>
            <person name="Krzywinski M."/>
            <person name="Mathewson C."/>
            <person name="Siddiqui A."/>
            <person name="Wye N."/>
            <person name="McPherson J."/>
            <person name="Zhao S."/>
            <person name="Fraser C.M."/>
            <person name="Shetty J."/>
            <person name="Shatsman S."/>
            <person name="Geer K."/>
            <person name="Chen Y."/>
            <person name="Abramzon S."/>
            <person name="Nierman W.C."/>
            <person name="Havlak P.H."/>
            <person name="Chen R."/>
            <person name="Durbin K.J."/>
            <person name="Egan A."/>
            <person name="Ren Y."/>
            <person name="Song X.-Z."/>
            <person name="Li B."/>
            <person name="Liu Y."/>
            <person name="Qin X."/>
            <person name="Cawley S."/>
            <person name="Cooney A.J."/>
            <person name="D'Souza L.M."/>
            <person name="Martin K."/>
            <person name="Wu J.Q."/>
            <person name="Gonzalez-Garay M.L."/>
            <person name="Jackson A.R."/>
            <person name="Kalafus K.J."/>
            <person name="McLeod M.P."/>
            <person name="Milosavljevic A."/>
            <person name="Virk D."/>
            <person name="Volkov A."/>
            <person name="Wheeler D.A."/>
            <person name="Zhang Z."/>
            <person name="Bailey J.A."/>
            <person name="Eichler E.E."/>
            <person name="Tuzun E."/>
            <person name="Birney E."/>
            <person name="Mongin E."/>
            <person name="Ureta-Vidal A."/>
            <person name="Woodwark C."/>
            <person name="Zdobnov E."/>
            <person name="Bork P."/>
            <person name="Suyama M."/>
            <person name="Torrents D."/>
            <person name="Alexandersson M."/>
            <person name="Trask B.J."/>
            <person name="Young J.M."/>
            <person name="Huang H."/>
            <person name="Wang H."/>
            <person name="Xing H."/>
            <person name="Daniels S."/>
            <person name="Gietzen D."/>
            <person name="Schmidt J."/>
            <person name="Stevens K."/>
            <person name="Vitt U."/>
            <person name="Wingrove J."/>
            <person name="Camara F."/>
            <person name="Mar Alba M."/>
            <person name="Abril J.F."/>
            <person name="Guigo R."/>
            <person name="Smit A."/>
            <person name="Dubchak I."/>
            <person name="Rubin E.M."/>
            <person name="Couronne O."/>
            <person name="Poliakov A."/>
            <person name="Huebner N."/>
            <person name="Ganten D."/>
            <person name="Goesele C."/>
            <person name="Hummel O."/>
            <person name="Kreitler T."/>
            <person name="Lee Y.-A."/>
            <person name="Monti J."/>
            <person name="Schulz H."/>
            <person name="Zimdahl H."/>
            <person name="Himmelbauer H."/>
            <person name="Lehrach H."/>
            <person name="Jacob H.J."/>
            <person name="Bromberg S."/>
            <person name="Gullings-Handley J."/>
            <person name="Jensen-Seaman M.I."/>
            <person name="Kwitek A.E."/>
            <person name="Lazar J."/>
            <person name="Pasko D."/>
            <person name="Tonellato P.J."/>
            <person name="Twigger S."/>
            <person name="Ponting C.P."/>
            <person name="Duarte J.M."/>
            <person name="Rice S."/>
            <person name="Goodstadt L."/>
            <person name="Beatson S.A."/>
            <person name="Emes R.D."/>
            <person name="Winter E.E."/>
            <person name="Webber C."/>
            <person name="Brandt P."/>
            <person name="Nyakatura G."/>
            <person name="Adetobi M."/>
            <person name="Chiaromonte F."/>
            <person name="Elnitski L."/>
            <person name="Eswara P."/>
            <person name="Hardison R.C."/>
            <person name="Hou M."/>
            <person name="Kolbe D."/>
            <person name="Makova K."/>
            <person name="Miller W."/>
            <person name="Nekrutenko A."/>
            <person name="Riemer C."/>
            <person name="Schwartz S."/>
            <person name="Taylor J."/>
            <person name="Yang S."/>
            <person name="Zhang Y."/>
            <person name="Lindpaintner K."/>
            <person name="Andrews T.D."/>
            <person name="Caccamo M."/>
            <person name="Clamp M."/>
            <person name="Clarke L."/>
            <person name="Curwen V."/>
            <person name="Durbin R.M."/>
            <person name="Eyras E."/>
            <person name="Searle S.M."/>
            <person name="Cooper G.M."/>
            <person name="Batzoglou S."/>
            <person name="Brudno M."/>
            <person name="Sidow A."/>
            <person name="Stone E.A."/>
            <person name="Payseur B.A."/>
            <person name="Bourque G."/>
            <person name="Lopez-Otin C."/>
            <person name="Puente X.S."/>
            <person name="Chakrabarti K."/>
            <person name="Chatterji S."/>
            <person name="Dewey C."/>
            <person name="Pachter L."/>
            <person name="Bray N."/>
            <person name="Yap V.B."/>
            <person name="Caspi A."/>
            <person name="Tesler G."/>
            <person name="Pevzner P.A."/>
            <person name="Haussler D."/>
            <person name="Roskin K.M."/>
            <person name="Baertsch R."/>
            <person name="Clawson H."/>
            <person name="Furey T.S."/>
            <person name="Hinrichs A.S."/>
            <person name="Karolchik D."/>
            <person name="Kent W.J."/>
            <person name="Rosenbloom K.R."/>
            <person name="Trumbower H."/>
            <person name="Weirauch M."/>
            <person name="Cooper D.N."/>
            <person name="Stenson P.D."/>
            <person name="Ma B."/>
            <person name="Brent M."/>
            <person name="Arumugam M."/>
            <person name="Shteynberg D."/>
            <person name="Copley R.R."/>
            <person name="Taylor M.S."/>
            <person name="Riethman H."/>
            <person name="Mudunuri U."/>
            <person name="Peterson J."/>
            <person name="Guyer M."/>
            <person name="Felsenfeld A."/>
            <person name="Old S."/>
            <person name="Mockrin S."/>
            <person name="Collins F.S."/>
        </authorList>
    </citation>
    <scope>NUCLEOTIDE SEQUENCE [LARGE SCALE GENOMIC DNA]</scope>
    <source>
        <strain>Brown Norway</strain>
    </source>
</reference>
<dbReference type="RefSeq" id="NP_001258044.1">
    <property type="nucleotide sequence ID" value="NM_001271115.1"/>
</dbReference>
<dbReference type="BioGRID" id="1198888">
    <property type="interactions" value="1"/>
</dbReference>
<dbReference type="FunCoup" id="D3ZCM9">
    <property type="interactions" value="58"/>
</dbReference>
<dbReference type="STRING" id="10116.ENSRNOP00000055687"/>
<dbReference type="GlyGen" id="D3ZCM9">
    <property type="glycosylation" value="1 site"/>
</dbReference>
<dbReference type="PhosphoSitePlus" id="D3ZCM9"/>
<dbReference type="PaxDb" id="10116-ENSRNOP00000055687"/>
<dbReference type="GeneID" id="100359753"/>
<dbReference type="KEGG" id="rno:100359753"/>
<dbReference type="UCSC" id="RGD:2323487">
    <property type="organism name" value="rat"/>
</dbReference>
<dbReference type="AGR" id="RGD:2323487"/>
<dbReference type="CTD" id="352909"/>
<dbReference type="RGD" id="2323487">
    <property type="gene designation" value="Dnaaf3"/>
</dbReference>
<dbReference type="VEuPathDB" id="HostDB:ENSRNOG00000038600"/>
<dbReference type="eggNOG" id="ENOG502QT97">
    <property type="taxonomic scope" value="Eukaryota"/>
</dbReference>
<dbReference type="InParanoid" id="D3ZCM9"/>
<dbReference type="OrthoDB" id="538817at2759"/>
<dbReference type="PhylomeDB" id="D3ZCM9"/>
<dbReference type="TreeFam" id="TF323981"/>
<dbReference type="PRO" id="PR:D3ZCM9"/>
<dbReference type="Proteomes" id="UP000002494">
    <property type="component" value="Chromosome 1"/>
</dbReference>
<dbReference type="Bgee" id="ENSRNOG00000038600">
    <property type="expression patterns" value="Expressed in testis and 8 other cell types or tissues"/>
</dbReference>
<dbReference type="ExpressionAtlas" id="D3ZCM9">
    <property type="expression patterns" value="baseline and differential"/>
</dbReference>
<dbReference type="GO" id="GO:0120293">
    <property type="term" value="C:dynein axonemal particle"/>
    <property type="evidence" value="ECO:0000250"/>
    <property type="project" value="UniProtKB"/>
</dbReference>
<dbReference type="GO" id="GO:0070286">
    <property type="term" value="P:axonemal dynein complex assembly"/>
    <property type="evidence" value="ECO:0000250"/>
    <property type="project" value="UniProtKB"/>
</dbReference>
<dbReference type="GO" id="GO:0007368">
    <property type="term" value="P:determination of left/right symmetry"/>
    <property type="evidence" value="ECO:0000266"/>
    <property type="project" value="RGD"/>
</dbReference>
<dbReference type="GO" id="GO:0007507">
    <property type="term" value="P:heart development"/>
    <property type="evidence" value="ECO:0000266"/>
    <property type="project" value="RGD"/>
</dbReference>
<dbReference type="GO" id="GO:0044458">
    <property type="term" value="P:motile cilium assembly"/>
    <property type="evidence" value="ECO:0000250"/>
    <property type="project" value="UniProtKB"/>
</dbReference>
<dbReference type="InterPro" id="IPR039304">
    <property type="entry name" value="DNAAF3"/>
</dbReference>
<dbReference type="InterPro" id="IPR028235">
    <property type="entry name" value="DNAAF3_C"/>
</dbReference>
<dbReference type="InterPro" id="IPR027974">
    <property type="entry name" value="DUF4470"/>
</dbReference>
<dbReference type="PANTHER" id="PTHR22118">
    <property type="entry name" value="DYNEIN ASSEMBLY FACTOR 3, AXONEMAL"/>
    <property type="match status" value="1"/>
</dbReference>
<dbReference type="PANTHER" id="PTHR22118:SF14">
    <property type="entry name" value="DYNEIN AXONEMAL ASSEMBLY FACTOR 3"/>
    <property type="match status" value="1"/>
</dbReference>
<dbReference type="Pfam" id="PF14737">
    <property type="entry name" value="DUF4470"/>
    <property type="match status" value="1"/>
</dbReference>
<dbReference type="Pfam" id="PF14740">
    <property type="entry name" value="DUF4471"/>
    <property type="match status" value="1"/>
</dbReference>
<protein>
    <recommendedName>
        <fullName>Dynein axonemal assembly factor 3</fullName>
    </recommendedName>
</protein>
<accession>D3ZCM9</accession>
<keyword id="KW-0970">Cilium biogenesis/degradation</keyword>
<keyword id="KW-0963">Cytoplasm</keyword>
<keyword id="KW-1185">Reference proteome</keyword>
<gene>
    <name type="primary">Dnaaf3</name>
</gene>